<name>ASTE_ECO5E</name>
<evidence type="ECO:0000255" key="1">
    <source>
        <dbReference type="HAMAP-Rule" id="MF_00767"/>
    </source>
</evidence>
<organism>
    <name type="scientific">Escherichia coli O157:H7 (strain EC4115 / EHEC)</name>
    <dbReference type="NCBI Taxonomy" id="444450"/>
    <lineage>
        <taxon>Bacteria</taxon>
        <taxon>Pseudomonadati</taxon>
        <taxon>Pseudomonadota</taxon>
        <taxon>Gammaproteobacteria</taxon>
        <taxon>Enterobacterales</taxon>
        <taxon>Enterobacteriaceae</taxon>
        <taxon>Escherichia</taxon>
    </lineage>
</organism>
<comment type="function">
    <text evidence="1">Transforms N(2)-succinylglutamate into succinate and glutamate.</text>
</comment>
<comment type="catalytic activity">
    <reaction evidence="1">
        <text>N-succinyl-L-glutamate + H2O = L-glutamate + succinate</text>
        <dbReference type="Rhea" id="RHEA:15169"/>
        <dbReference type="ChEBI" id="CHEBI:15377"/>
        <dbReference type="ChEBI" id="CHEBI:29985"/>
        <dbReference type="ChEBI" id="CHEBI:30031"/>
        <dbReference type="ChEBI" id="CHEBI:58763"/>
        <dbReference type="EC" id="3.5.1.96"/>
    </reaction>
</comment>
<comment type="cofactor">
    <cofactor evidence="1">
        <name>Zn(2+)</name>
        <dbReference type="ChEBI" id="CHEBI:29105"/>
    </cofactor>
    <text evidence="1">Binds 1 zinc ion per subunit.</text>
</comment>
<comment type="pathway">
    <text evidence="1">Amino-acid degradation; L-arginine degradation via AST pathway; L-glutamate and succinate from L-arginine: step 5/5.</text>
</comment>
<comment type="similarity">
    <text evidence="1">Belongs to the AspA/AstE family. Succinylglutamate desuccinylase subfamily.</text>
</comment>
<feature type="chain" id="PRO_1000133627" description="Succinylglutamate desuccinylase">
    <location>
        <begin position="1"/>
        <end position="322"/>
    </location>
</feature>
<feature type="active site" evidence="1">
    <location>
        <position position="210"/>
    </location>
</feature>
<feature type="binding site" evidence="1">
    <location>
        <position position="53"/>
    </location>
    <ligand>
        <name>Zn(2+)</name>
        <dbReference type="ChEBI" id="CHEBI:29105"/>
    </ligand>
</feature>
<feature type="binding site" evidence="1">
    <location>
        <position position="56"/>
    </location>
    <ligand>
        <name>Zn(2+)</name>
        <dbReference type="ChEBI" id="CHEBI:29105"/>
    </ligand>
</feature>
<feature type="binding site" evidence="1">
    <location>
        <position position="147"/>
    </location>
    <ligand>
        <name>Zn(2+)</name>
        <dbReference type="ChEBI" id="CHEBI:29105"/>
    </ligand>
</feature>
<reference key="1">
    <citation type="journal article" date="2011" name="Proc. Natl. Acad. Sci. U.S.A.">
        <title>Genomic anatomy of Escherichia coli O157:H7 outbreaks.</title>
        <authorList>
            <person name="Eppinger M."/>
            <person name="Mammel M.K."/>
            <person name="Leclerc J.E."/>
            <person name="Ravel J."/>
            <person name="Cebula T.A."/>
        </authorList>
    </citation>
    <scope>NUCLEOTIDE SEQUENCE [LARGE SCALE GENOMIC DNA]</scope>
    <source>
        <strain>EC4115 / EHEC</strain>
    </source>
</reference>
<protein>
    <recommendedName>
        <fullName evidence="1">Succinylglutamate desuccinylase</fullName>
        <ecNumber evidence="1">3.5.1.96</ecNumber>
    </recommendedName>
</protein>
<sequence length="322" mass="35829">MDNFLALTLTSKKPVITEREINGVRWRWLGDGVLELTPLTPPQGALVISAGIHGNETAPVEMLDALLGAISHGEIPLRWRLLVILGNPPALKQGKRYCHSDMNRMFGGRWQLFAESGETCRARELEQCLEDFYDQGKESVRWHLDLHTAIRGSLHPQFGVLPQRDIPWDEKFLTWLGAAGLEALVFHQEPGGTFTHFSARHFGALACTLELGKALPFGQNDLRQFAVTASAIAALLSGESVGIVRTPPLRYRVVSQITRHSPSFEMHMASDTLNFMPFKKGTLLAQDGEERFTVTHDVEYVLFPNPLVALGLRAGLMLEKIS</sequence>
<accession>B5YQ31</accession>
<dbReference type="EC" id="3.5.1.96" evidence="1"/>
<dbReference type="EMBL" id="CP001164">
    <property type="protein sequence ID" value="ACI38170.1"/>
    <property type="molecule type" value="Genomic_DNA"/>
</dbReference>
<dbReference type="RefSeq" id="WP_000368529.1">
    <property type="nucleotide sequence ID" value="NC_011353.1"/>
</dbReference>
<dbReference type="SMR" id="B5YQ31"/>
<dbReference type="KEGG" id="ecf:ECH74115_2462"/>
<dbReference type="HOGENOM" id="CLU_071608_0_0_6"/>
<dbReference type="UniPathway" id="UPA00185">
    <property type="reaction ID" value="UER00283"/>
</dbReference>
<dbReference type="GO" id="GO:0016788">
    <property type="term" value="F:hydrolase activity, acting on ester bonds"/>
    <property type="evidence" value="ECO:0007669"/>
    <property type="project" value="UniProtKB-UniRule"/>
</dbReference>
<dbReference type="GO" id="GO:0009017">
    <property type="term" value="F:succinylglutamate desuccinylase activity"/>
    <property type="evidence" value="ECO:0007669"/>
    <property type="project" value="UniProtKB-EC"/>
</dbReference>
<dbReference type="GO" id="GO:0008270">
    <property type="term" value="F:zinc ion binding"/>
    <property type="evidence" value="ECO:0007669"/>
    <property type="project" value="UniProtKB-UniRule"/>
</dbReference>
<dbReference type="GO" id="GO:0019544">
    <property type="term" value="P:arginine catabolic process to glutamate"/>
    <property type="evidence" value="ECO:0007669"/>
    <property type="project" value="UniProtKB-UniRule"/>
</dbReference>
<dbReference type="GO" id="GO:0019545">
    <property type="term" value="P:arginine catabolic process to succinate"/>
    <property type="evidence" value="ECO:0007669"/>
    <property type="project" value="UniProtKB-UniRule"/>
</dbReference>
<dbReference type="CDD" id="cd03855">
    <property type="entry name" value="M14_ASTE"/>
    <property type="match status" value="1"/>
</dbReference>
<dbReference type="FunFam" id="3.40.630.10:FF:000017">
    <property type="entry name" value="Succinylglutamate desuccinylase"/>
    <property type="match status" value="1"/>
</dbReference>
<dbReference type="Gene3D" id="3.40.630.10">
    <property type="entry name" value="Zn peptidases"/>
    <property type="match status" value="1"/>
</dbReference>
<dbReference type="HAMAP" id="MF_00767">
    <property type="entry name" value="Arg_catab_AstE"/>
    <property type="match status" value="1"/>
</dbReference>
<dbReference type="InterPro" id="IPR050178">
    <property type="entry name" value="AspA/AstE_fam"/>
</dbReference>
<dbReference type="InterPro" id="IPR055438">
    <property type="entry name" value="AstE_AspA_cat"/>
</dbReference>
<dbReference type="InterPro" id="IPR007036">
    <property type="entry name" value="Aste_AspA_hybrid_dom"/>
</dbReference>
<dbReference type="InterPro" id="IPR016681">
    <property type="entry name" value="SuccinylGlu_desuccinylase"/>
</dbReference>
<dbReference type="NCBIfam" id="TIGR03242">
    <property type="entry name" value="arg_catab_astE"/>
    <property type="match status" value="1"/>
</dbReference>
<dbReference type="NCBIfam" id="NF003706">
    <property type="entry name" value="PRK05324.1"/>
    <property type="match status" value="1"/>
</dbReference>
<dbReference type="PANTHER" id="PTHR15162">
    <property type="entry name" value="ASPARTOACYLASE"/>
    <property type="match status" value="1"/>
</dbReference>
<dbReference type="PANTHER" id="PTHR15162:SF7">
    <property type="entry name" value="SUCCINYLGLUTAMATE DESUCCINYLASE"/>
    <property type="match status" value="1"/>
</dbReference>
<dbReference type="Pfam" id="PF24827">
    <property type="entry name" value="AstE_AspA_cat"/>
    <property type="match status" value="1"/>
</dbReference>
<dbReference type="Pfam" id="PF04952">
    <property type="entry name" value="AstE_AspA_hybrid"/>
    <property type="match status" value="1"/>
</dbReference>
<dbReference type="PIRSF" id="PIRSF017020">
    <property type="entry name" value="AstE"/>
    <property type="match status" value="1"/>
</dbReference>
<dbReference type="SUPFAM" id="SSF53187">
    <property type="entry name" value="Zn-dependent exopeptidases"/>
    <property type="match status" value="1"/>
</dbReference>
<keyword id="KW-0056">Arginine metabolism</keyword>
<keyword id="KW-0378">Hydrolase</keyword>
<keyword id="KW-0479">Metal-binding</keyword>
<keyword id="KW-0862">Zinc</keyword>
<proteinExistence type="inferred from homology"/>
<gene>
    <name evidence="1" type="primary">astE</name>
    <name type="ordered locus">ECH74115_2462</name>
</gene>